<sequence>MKTKLMITIFSCLLLWSMLLLLSFSNIFKHQLLGATINVGSKDSVKPRDRLLGGLLTADFDEDSCLSRYQSSLYRKPSPYRTSEYLISKLRNYEMLHKRCGPGTDAYKRATEKLGHDHENVGDSSDGECKYIVWVAVYGLGNRILTLASVFLYALLTERIILVDQRKDISDLFCEPFPGTSWLLPLDFPLMGQIDSFNREYSHCYGTMLKNHTINSTTIPSHLYLHLLHDYRDQDKMFFCQKDQSLVDKVPWLVVKSNLYFIPSLWLNPSFQTELIKLFPQKDTVFYHLARYLFHPTNQVWGMVTRSYNAYLSRADEILGIQVRVFSRQTKYFQHVMDQIVACTQREKLLPEFAAQEEAQVTNTSNPSKLKAVLVTSLNPEYSNNLKKMYWEHPTTTGDIVEVYQPSRERFQQTDKKLHDQKALAEMYLLSLTDKLVTSALSTFGYVAQGLGGLKPWILYTPKKFKSPNPPCGRVISMEPCFLTPPVHGCEAKKGINTAKIVPFVRHCEDLRHYGLKLVDDTKNEL</sequence>
<comment type="function">
    <text>May be involved in cell wall biosynthesis. May act as a fucosyltransferase.</text>
</comment>
<comment type="pathway">
    <text>Protein modification; protein glycosylation.</text>
</comment>
<comment type="subcellular location">
    <subcellularLocation>
        <location evidence="1">Golgi apparatus</location>
        <location evidence="1">Golgi stack membrane</location>
        <topology evidence="1">Single-pass type II membrane protein</topology>
    </subcellularLocation>
    <text evidence="1">Membrane-bound form in trans cisternae of Golgi.</text>
</comment>
<comment type="tissue specificity">
    <text evidence="3">Expressed in roots, leaves, stems and seedlings.</text>
</comment>
<comment type="similarity">
    <text evidence="4">Belongs to the glycosyltransferase 37 family.</text>
</comment>
<comment type="sequence caution" evidence="4">
    <conflict type="erroneous gene model prediction">
        <sequence resource="EMBL-CDS" id="AAF79408"/>
    </conflict>
</comment>
<name>FUT7_ARATH</name>
<accession>Q9XI81</accession>
<accession>F4HUF0</accession>
<accession>Q9LMF2</accession>
<proteinExistence type="evidence at transcript level"/>
<dbReference type="EC" id="2.4.1.-"/>
<dbReference type="EMBL" id="AC007576">
    <property type="protein sequence ID" value="AAD39292.1"/>
    <property type="molecule type" value="Genomic_DNA"/>
</dbReference>
<dbReference type="EMBL" id="AC068197">
    <property type="protein sequence ID" value="AAF79408.1"/>
    <property type="status" value="ALT_SEQ"/>
    <property type="molecule type" value="Genomic_DNA"/>
</dbReference>
<dbReference type="EMBL" id="CP002684">
    <property type="status" value="NOT_ANNOTATED_CDS"/>
    <property type="molecule type" value="Genomic_DNA"/>
</dbReference>
<dbReference type="PIR" id="A86274">
    <property type="entry name" value="A86274"/>
</dbReference>
<dbReference type="SMR" id="Q9XI81"/>
<dbReference type="BioGRID" id="23207">
    <property type="interactions" value="1"/>
</dbReference>
<dbReference type="STRING" id="3702.Q9XI81"/>
<dbReference type="CAZy" id="GT37">
    <property type="family name" value="Glycosyltransferase Family 37"/>
</dbReference>
<dbReference type="GlyCosmos" id="Q9XI81">
    <property type="glycosylation" value="3 sites, No reported glycans"/>
</dbReference>
<dbReference type="GlyGen" id="Q9XI81">
    <property type="glycosylation" value="3 sites"/>
</dbReference>
<dbReference type="PaxDb" id="3702-AT1G14070.1"/>
<dbReference type="Araport" id="AT1G14070"/>
<dbReference type="TAIR" id="AT1G14070"/>
<dbReference type="eggNOG" id="ENOG502QTTA">
    <property type="taxonomic scope" value="Eukaryota"/>
</dbReference>
<dbReference type="InParanoid" id="Q9XI81"/>
<dbReference type="PhylomeDB" id="Q9XI81"/>
<dbReference type="UniPathway" id="UPA00378"/>
<dbReference type="PRO" id="PR:Q9XI81"/>
<dbReference type="Proteomes" id="UP000006548">
    <property type="component" value="Chromosome 1"/>
</dbReference>
<dbReference type="ExpressionAtlas" id="Q9XI81">
    <property type="expression patterns" value="baseline and differential"/>
</dbReference>
<dbReference type="GO" id="GO:0032580">
    <property type="term" value="C:Golgi cisterna membrane"/>
    <property type="evidence" value="ECO:0007669"/>
    <property type="project" value="UniProtKB-SubCell"/>
</dbReference>
<dbReference type="GO" id="GO:0008107">
    <property type="term" value="F:galactoside 2-alpha-L-fucosyltransferase activity"/>
    <property type="evidence" value="ECO:0007669"/>
    <property type="project" value="InterPro"/>
</dbReference>
<dbReference type="GO" id="GO:0042546">
    <property type="term" value="P:cell wall biogenesis"/>
    <property type="evidence" value="ECO:0007669"/>
    <property type="project" value="InterPro"/>
</dbReference>
<dbReference type="GO" id="GO:0071555">
    <property type="term" value="P:cell wall organization"/>
    <property type="evidence" value="ECO:0007669"/>
    <property type="project" value="UniProtKB-KW"/>
</dbReference>
<dbReference type="GO" id="GO:0006486">
    <property type="term" value="P:protein glycosylation"/>
    <property type="evidence" value="ECO:0007669"/>
    <property type="project" value="UniProtKB-UniPathway"/>
</dbReference>
<dbReference type="GO" id="GO:0009969">
    <property type="term" value="P:xyloglucan biosynthetic process"/>
    <property type="evidence" value="ECO:0000318"/>
    <property type="project" value="GO_Central"/>
</dbReference>
<dbReference type="FunFam" id="3.40.50.11340:FF:000005">
    <property type="entry name" value="Galactoside 2-alpha-L-fucosyltransferase"/>
    <property type="match status" value="1"/>
</dbReference>
<dbReference type="Gene3D" id="3.40.50.11340">
    <property type="match status" value="1"/>
</dbReference>
<dbReference type="Gene3D" id="3.40.50.11350">
    <property type="match status" value="1"/>
</dbReference>
<dbReference type="InterPro" id="IPR004938">
    <property type="entry name" value="XG_FTase"/>
</dbReference>
<dbReference type="PANTHER" id="PTHR31889">
    <property type="entry name" value="FUCOSYLTRANSFERASE 2-RELATED"/>
    <property type="match status" value="1"/>
</dbReference>
<dbReference type="PANTHER" id="PTHR31889:SF61">
    <property type="entry name" value="FUCOSYLTRANSFERASE 7-RELATED"/>
    <property type="match status" value="1"/>
</dbReference>
<dbReference type="Pfam" id="PF03254">
    <property type="entry name" value="XG_FTase"/>
    <property type="match status" value="1"/>
</dbReference>
<gene>
    <name type="primary">FUT7</name>
    <name type="ordered locus">At1g14070</name>
    <name type="ORF">F16A14.19</name>
    <name type="ORF">F16A14.28</name>
    <name type="ORF">F7A19.15</name>
</gene>
<keyword id="KW-0961">Cell wall biogenesis/degradation</keyword>
<keyword id="KW-0325">Glycoprotein</keyword>
<keyword id="KW-0328">Glycosyltransferase</keyword>
<keyword id="KW-0333">Golgi apparatus</keyword>
<keyword id="KW-0472">Membrane</keyword>
<keyword id="KW-1185">Reference proteome</keyword>
<keyword id="KW-0735">Signal-anchor</keyword>
<keyword id="KW-0808">Transferase</keyword>
<keyword id="KW-0812">Transmembrane</keyword>
<keyword id="KW-1133">Transmembrane helix</keyword>
<feature type="chain" id="PRO_0000193916" description="Probable fucosyltransferase 7">
    <location>
        <begin position="1"/>
        <end position="526"/>
    </location>
</feature>
<feature type="topological domain" description="Cytoplasmic" evidence="2">
    <location>
        <begin position="1"/>
        <end position="4"/>
    </location>
</feature>
<feature type="transmembrane region" description="Helical; Signal-anchor for type II membrane protein" evidence="2">
    <location>
        <begin position="5"/>
        <end position="25"/>
    </location>
</feature>
<feature type="topological domain" description="Lumenal" evidence="2">
    <location>
        <begin position="26"/>
        <end position="526"/>
    </location>
</feature>
<feature type="glycosylation site" description="N-linked (GlcNAc...) asparagine" evidence="2">
    <location>
        <position position="211"/>
    </location>
</feature>
<feature type="glycosylation site" description="N-linked (GlcNAc...) asparagine" evidence="2">
    <location>
        <position position="215"/>
    </location>
</feature>
<feature type="glycosylation site" description="N-linked (GlcNAc...) asparagine" evidence="2">
    <location>
        <position position="363"/>
    </location>
</feature>
<organism>
    <name type="scientific">Arabidopsis thaliana</name>
    <name type="common">Mouse-ear cress</name>
    <dbReference type="NCBI Taxonomy" id="3702"/>
    <lineage>
        <taxon>Eukaryota</taxon>
        <taxon>Viridiplantae</taxon>
        <taxon>Streptophyta</taxon>
        <taxon>Embryophyta</taxon>
        <taxon>Tracheophyta</taxon>
        <taxon>Spermatophyta</taxon>
        <taxon>Magnoliopsida</taxon>
        <taxon>eudicotyledons</taxon>
        <taxon>Gunneridae</taxon>
        <taxon>Pentapetalae</taxon>
        <taxon>rosids</taxon>
        <taxon>malvids</taxon>
        <taxon>Brassicales</taxon>
        <taxon>Brassicaceae</taxon>
        <taxon>Camelineae</taxon>
        <taxon>Arabidopsis</taxon>
    </lineage>
</organism>
<reference key="1">
    <citation type="journal article" date="2000" name="Nature">
        <title>Sequence and analysis of chromosome 1 of the plant Arabidopsis thaliana.</title>
        <authorList>
            <person name="Theologis A."/>
            <person name="Ecker J.R."/>
            <person name="Palm C.J."/>
            <person name="Federspiel N.A."/>
            <person name="Kaul S."/>
            <person name="White O."/>
            <person name="Alonso J."/>
            <person name="Altafi H."/>
            <person name="Araujo R."/>
            <person name="Bowman C.L."/>
            <person name="Brooks S.Y."/>
            <person name="Buehler E."/>
            <person name="Chan A."/>
            <person name="Chao Q."/>
            <person name="Chen H."/>
            <person name="Cheuk R.F."/>
            <person name="Chin C.W."/>
            <person name="Chung M.K."/>
            <person name="Conn L."/>
            <person name="Conway A.B."/>
            <person name="Conway A.R."/>
            <person name="Creasy T.H."/>
            <person name="Dewar K."/>
            <person name="Dunn P."/>
            <person name="Etgu P."/>
            <person name="Feldblyum T.V."/>
            <person name="Feng J.-D."/>
            <person name="Fong B."/>
            <person name="Fujii C.Y."/>
            <person name="Gill J.E."/>
            <person name="Goldsmith A.D."/>
            <person name="Haas B."/>
            <person name="Hansen N.F."/>
            <person name="Hughes B."/>
            <person name="Huizar L."/>
            <person name="Hunter J.L."/>
            <person name="Jenkins J."/>
            <person name="Johnson-Hopson C."/>
            <person name="Khan S."/>
            <person name="Khaykin E."/>
            <person name="Kim C.J."/>
            <person name="Koo H.L."/>
            <person name="Kremenetskaia I."/>
            <person name="Kurtz D.B."/>
            <person name="Kwan A."/>
            <person name="Lam B."/>
            <person name="Langin-Hooper S."/>
            <person name="Lee A."/>
            <person name="Lee J.M."/>
            <person name="Lenz C.A."/>
            <person name="Li J.H."/>
            <person name="Li Y.-P."/>
            <person name="Lin X."/>
            <person name="Liu S.X."/>
            <person name="Liu Z.A."/>
            <person name="Luros J.S."/>
            <person name="Maiti R."/>
            <person name="Marziali A."/>
            <person name="Militscher J."/>
            <person name="Miranda M."/>
            <person name="Nguyen M."/>
            <person name="Nierman W.C."/>
            <person name="Osborne B.I."/>
            <person name="Pai G."/>
            <person name="Peterson J."/>
            <person name="Pham P.K."/>
            <person name="Rizzo M."/>
            <person name="Rooney T."/>
            <person name="Rowley D."/>
            <person name="Sakano H."/>
            <person name="Salzberg S.L."/>
            <person name="Schwartz J.R."/>
            <person name="Shinn P."/>
            <person name="Southwick A.M."/>
            <person name="Sun H."/>
            <person name="Tallon L.J."/>
            <person name="Tambunga G."/>
            <person name="Toriumi M.J."/>
            <person name="Town C.D."/>
            <person name="Utterback T."/>
            <person name="Van Aken S."/>
            <person name="Vaysberg M."/>
            <person name="Vysotskaia V.S."/>
            <person name="Walker M."/>
            <person name="Wu D."/>
            <person name="Yu G."/>
            <person name="Fraser C.M."/>
            <person name="Venter J.C."/>
            <person name="Davis R.W."/>
        </authorList>
    </citation>
    <scope>NUCLEOTIDE SEQUENCE [LARGE SCALE GENOMIC DNA]</scope>
    <source>
        <strain>cv. Columbia</strain>
    </source>
</reference>
<reference key="2">
    <citation type="journal article" date="2017" name="Plant J.">
        <title>Araport11: a complete reannotation of the Arabidopsis thaliana reference genome.</title>
        <authorList>
            <person name="Cheng C.Y."/>
            <person name="Krishnakumar V."/>
            <person name="Chan A.P."/>
            <person name="Thibaud-Nissen F."/>
            <person name="Schobel S."/>
            <person name="Town C.D."/>
        </authorList>
    </citation>
    <scope>GENOME REANNOTATION</scope>
    <source>
        <strain>cv. Columbia</strain>
    </source>
</reference>
<reference key="3">
    <citation type="journal article" date="2001" name="Plant Physiol.">
        <title>Characterization of a family of Arabidopsis genes related to xyloglucan fucosyltransferase1.</title>
        <authorList>
            <person name="Sarria R."/>
            <person name="Wagner T.A."/>
            <person name="O'Neill M.A."/>
            <person name="Faik A."/>
            <person name="Wilkerson C.G."/>
            <person name="Keegstra K."/>
            <person name="Raikhel N.V."/>
        </authorList>
    </citation>
    <scope>IDENTIFICATION AS A PUTATIVE FUCOSYLTRANSFERASE</scope>
    <scope>TISSUE SPECIFICITY</scope>
</reference>
<protein>
    <recommendedName>
        <fullName>Probable fucosyltransferase 7</fullName>
        <shortName>AtFUT7</shortName>
        <ecNumber>2.4.1.-</ecNumber>
    </recommendedName>
</protein>
<evidence type="ECO:0000250" key="1"/>
<evidence type="ECO:0000255" key="2"/>
<evidence type="ECO:0000269" key="3">
    <source>
    </source>
</evidence>
<evidence type="ECO:0000305" key="4"/>